<proteinExistence type="inferred from homology"/>
<gene>
    <name type="ordered locus">Pret-088</name>
</gene>
<keyword id="KW-0325">Glycoprotein</keyword>
<keyword id="KW-1043">Host membrane</keyword>
<keyword id="KW-0472">Membrane</keyword>
<keyword id="KW-0812">Transmembrane</keyword>
<keyword id="KW-1133">Transmembrane helix</keyword>
<keyword id="KW-0946">Virion</keyword>
<feature type="chain" id="PRO_0000373551" description="Transmembrane protein B169L">
    <location>
        <begin position="1"/>
        <end position="169"/>
    </location>
</feature>
<feature type="transmembrane region" description="Helical" evidence="2">
    <location>
        <begin position="28"/>
        <end position="48"/>
    </location>
</feature>
<feature type="transmembrane region" description="Helical" evidence="2">
    <location>
        <begin position="60"/>
        <end position="80"/>
    </location>
</feature>
<feature type="region of interest" description="Disordered" evidence="3">
    <location>
        <begin position="107"/>
        <end position="169"/>
    </location>
</feature>
<feature type="compositionally biased region" description="Low complexity" evidence="3">
    <location>
        <begin position="144"/>
        <end position="154"/>
    </location>
</feature>
<feature type="glycosylation site" description="N-linked (GlcNAc...) asparagine; by host" evidence="2">
    <location>
        <position position="88"/>
    </location>
</feature>
<dbReference type="EMBL" id="AY261363">
    <property type="status" value="NOT_ANNOTATED_CDS"/>
    <property type="molecule type" value="Genomic_DNA"/>
</dbReference>
<dbReference type="SMR" id="P0CA71"/>
<dbReference type="Proteomes" id="UP000000859">
    <property type="component" value="Segment"/>
</dbReference>
<dbReference type="GO" id="GO:0033644">
    <property type="term" value="C:host cell membrane"/>
    <property type="evidence" value="ECO:0007669"/>
    <property type="project" value="UniProtKB-SubCell"/>
</dbReference>
<dbReference type="GO" id="GO:0016020">
    <property type="term" value="C:membrane"/>
    <property type="evidence" value="ECO:0007669"/>
    <property type="project" value="UniProtKB-KW"/>
</dbReference>
<dbReference type="GO" id="GO:0044423">
    <property type="term" value="C:virion component"/>
    <property type="evidence" value="ECO:0007669"/>
    <property type="project" value="UniProtKB-KW"/>
</dbReference>
<reference key="1">
    <citation type="submission" date="2003-03" db="EMBL/GenBank/DDBJ databases">
        <title>African swine fever virus genomes.</title>
        <authorList>
            <person name="Kutish G.F."/>
            <person name="Rock D.L."/>
        </authorList>
    </citation>
    <scope>NUCLEOTIDE SEQUENCE [LARGE SCALE GENOMIC DNA]</scope>
</reference>
<organismHost>
    <name type="scientific">Ornithodoros</name>
    <name type="common">relapsing fever ticks</name>
    <dbReference type="NCBI Taxonomy" id="6937"/>
</organismHost>
<organismHost>
    <name type="scientific">Phacochoerus aethiopicus</name>
    <name type="common">Warthog</name>
    <dbReference type="NCBI Taxonomy" id="85517"/>
</organismHost>
<organismHost>
    <name type="scientific">Phacochoerus africanus</name>
    <name type="common">Warthog</name>
    <dbReference type="NCBI Taxonomy" id="41426"/>
</organismHost>
<organismHost>
    <name type="scientific">Potamochoerus larvatus</name>
    <name type="common">Bushpig</name>
    <dbReference type="NCBI Taxonomy" id="273792"/>
</organismHost>
<organismHost>
    <name type="scientific">Sus scrofa</name>
    <name type="common">Pig</name>
    <dbReference type="NCBI Taxonomy" id="9823"/>
</organismHost>
<comment type="subcellular location">
    <subcellularLocation>
        <location evidence="4">Host membrane</location>
        <topology evidence="4">Multi-pass membrane protein</topology>
    </subcellularLocation>
    <subcellularLocation>
        <location evidence="1">Virion</location>
    </subcellularLocation>
</comment>
<comment type="similarity">
    <text evidence="4">Belongs to the asfivirus B169L family.</text>
</comment>
<sequence length="169" mass="18700">MNVDFIAGINNLGEKIYTCEPFKTSFQNPFIVALIITAVVLVVFFAICNPPVDKKRKTKTAIYVYICIVALLFLHYYVLNHQLNDIYNKSNMDVIVSSIHDKYKGGDEIIPPISPPSVSNELEEDQPKKIAAGSKPADSKPADSKPASSADSKPLVPLQEVIMPSQYNN</sequence>
<evidence type="ECO:0000250" key="1">
    <source>
        <dbReference type="UniProtKB" id="Q65166"/>
    </source>
</evidence>
<evidence type="ECO:0000255" key="2"/>
<evidence type="ECO:0000256" key="3">
    <source>
        <dbReference type="SAM" id="MobiDB-lite"/>
    </source>
</evidence>
<evidence type="ECO:0000305" key="4"/>
<organism>
    <name type="scientific">African swine fever virus (isolate Tick/South Africa/Pretoriuskop Pr4/1996)</name>
    <name type="common">ASFV</name>
    <dbReference type="NCBI Taxonomy" id="561443"/>
    <lineage>
        <taxon>Viruses</taxon>
        <taxon>Varidnaviria</taxon>
        <taxon>Bamfordvirae</taxon>
        <taxon>Nucleocytoviricota</taxon>
        <taxon>Pokkesviricetes</taxon>
        <taxon>Asfuvirales</taxon>
        <taxon>Asfarviridae</taxon>
        <taxon>Asfivirus</taxon>
        <taxon>African swine fever virus</taxon>
    </lineage>
</organism>
<name>VF169_ASFP4</name>
<accession>P0CA71</accession>
<protein>
    <recommendedName>
        <fullName>Transmembrane protein B169L</fullName>
        <shortName>pB169L</shortName>
    </recommendedName>
</protein>